<proteinExistence type="inferred from homology"/>
<evidence type="ECO:0000255" key="1">
    <source>
        <dbReference type="HAMAP-Rule" id="MF_01331"/>
    </source>
</evidence>
<evidence type="ECO:0000305" key="2"/>
<organism>
    <name type="scientific">Pseudarthrobacter chlorophenolicus (strain ATCC 700700 / DSM 12829 / CIP 107037 / JCM 12360 / KCTC 9906 / NCIMB 13794 / A6)</name>
    <name type="common">Arthrobacter chlorophenolicus</name>
    <dbReference type="NCBI Taxonomy" id="452863"/>
    <lineage>
        <taxon>Bacteria</taxon>
        <taxon>Bacillati</taxon>
        <taxon>Actinomycetota</taxon>
        <taxon>Actinomycetes</taxon>
        <taxon>Micrococcales</taxon>
        <taxon>Micrococcaceae</taxon>
        <taxon>Pseudarthrobacter</taxon>
    </lineage>
</organism>
<reference key="1">
    <citation type="submission" date="2009-01" db="EMBL/GenBank/DDBJ databases">
        <title>Complete sequence of chromosome of Arthrobacter chlorophenolicus A6.</title>
        <authorList>
            <consortium name="US DOE Joint Genome Institute"/>
            <person name="Lucas S."/>
            <person name="Copeland A."/>
            <person name="Lapidus A."/>
            <person name="Glavina del Rio T."/>
            <person name="Tice H."/>
            <person name="Bruce D."/>
            <person name="Goodwin L."/>
            <person name="Pitluck S."/>
            <person name="Goltsman E."/>
            <person name="Clum A."/>
            <person name="Larimer F."/>
            <person name="Land M."/>
            <person name="Hauser L."/>
            <person name="Kyrpides N."/>
            <person name="Mikhailova N."/>
            <person name="Jansson J."/>
            <person name="Richardson P."/>
        </authorList>
    </citation>
    <scope>NUCLEOTIDE SEQUENCE [LARGE SCALE GENOMIC DNA]</scope>
    <source>
        <strain>ATCC 700700 / DSM 12829 / CIP 107037 / JCM 12360 / KCTC 9906 / NCIMB 13794 / A6</strain>
    </source>
</reference>
<name>RL22_PSECP</name>
<keyword id="KW-0687">Ribonucleoprotein</keyword>
<keyword id="KW-0689">Ribosomal protein</keyword>
<keyword id="KW-0694">RNA-binding</keyword>
<keyword id="KW-0699">rRNA-binding</keyword>
<protein>
    <recommendedName>
        <fullName evidence="1">Large ribosomal subunit protein uL22</fullName>
    </recommendedName>
    <alternativeName>
        <fullName evidence="2">50S ribosomal protein L22</fullName>
    </alternativeName>
</protein>
<feature type="chain" id="PRO_1000166040" description="Large ribosomal subunit protein uL22">
    <location>
        <begin position="1"/>
        <end position="121"/>
    </location>
</feature>
<dbReference type="EMBL" id="CP001341">
    <property type="protein sequence ID" value="ACL40647.1"/>
    <property type="molecule type" value="Genomic_DNA"/>
</dbReference>
<dbReference type="RefSeq" id="WP_009358304.1">
    <property type="nucleotide sequence ID" value="NC_011886.1"/>
</dbReference>
<dbReference type="SMR" id="B8HD01"/>
<dbReference type="STRING" id="452863.Achl_2682"/>
<dbReference type="GeneID" id="97421009"/>
<dbReference type="KEGG" id="ach:Achl_2682"/>
<dbReference type="eggNOG" id="COG0091">
    <property type="taxonomic scope" value="Bacteria"/>
</dbReference>
<dbReference type="HOGENOM" id="CLU_083987_3_3_11"/>
<dbReference type="OrthoDB" id="9805969at2"/>
<dbReference type="Proteomes" id="UP000002505">
    <property type="component" value="Chromosome"/>
</dbReference>
<dbReference type="GO" id="GO:0022625">
    <property type="term" value="C:cytosolic large ribosomal subunit"/>
    <property type="evidence" value="ECO:0007669"/>
    <property type="project" value="TreeGrafter"/>
</dbReference>
<dbReference type="GO" id="GO:0019843">
    <property type="term" value="F:rRNA binding"/>
    <property type="evidence" value="ECO:0007669"/>
    <property type="project" value="UniProtKB-UniRule"/>
</dbReference>
<dbReference type="GO" id="GO:0003735">
    <property type="term" value="F:structural constituent of ribosome"/>
    <property type="evidence" value="ECO:0007669"/>
    <property type="project" value="InterPro"/>
</dbReference>
<dbReference type="GO" id="GO:0006412">
    <property type="term" value="P:translation"/>
    <property type="evidence" value="ECO:0007669"/>
    <property type="project" value="UniProtKB-UniRule"/>
</dbReference>
<dbReference type="CDD" id="cd00336">
    <property type="entry name" value="Ribosomal_L22"/>
    <property type="match status" value="1"/>
</dbReference>
<dbReference type="Gene3D" id="3.90.470.10">
    <property type="entry name" value="Ribosomal protein L22/L17"/>
    <property type="match status" value="1"/>
</dbReference>
<dbReference type="HAMAP" id="MF_01331_B">
    <property type="entry name" value="Ribosomal_uL22_B"/>
    <property type="match status" value="1"/>
</dbReference>
<dbReference type="InterPro" id="IPR001063">
    <property type="entry name" value="Ribosomal_uL22"/>
</dbReference>
<dbReference type="InterPro" id="IPR005727">
    <property type="entry name" value="Ribosomal_uL22_bac/chlpt-type"/>
</dbReference>
<dbReference type="InterPro" id="IPR047867">
    <property type="entry name" value="Ribosomal_uL22_bac/org-type"/>
</dbReference>
<dbReference type="InterPro" id="IPR018260">
    <property type="entry name" value="Ribosomal_uL22_CS"/>
</dbReference>
<dbReference type="InterPro" id="IPR036394">
    <property type="entry name" value="Ribosomal_uL22_sf"/>
</dbReference>
<dbReference type="NCBIfam" id="TIGR01044">
    <property type="entry name" value="rplV_bact"/>
    <property type="match status" value="1"/>
</dbReference>
<dbReference type="PANTHER" id="PTHR13501">
    <property type="entry name" value="CHLOROPLAST 50S RIBOSOMAL PROTEIN L22-RELATED"/>
    <property type="match status" value="1"/>
</dbReference>
<dbReference type="PANTHER" id="PTHR13501:SF8">
    <property type="entry name" value="LARGE RIBOSOMAL SUBUNIT PROTEIN UL22M"/>
    <property type="match status" value="1"/>
</dbReference>
<dbReference type="Pfam" id="PF00237">
    <property type="entry name" value="Ribosomal_L22"/>
    <property type="match status" value="1"/>
</dbReference>
<dbReference type="SUPFAM" id="SSF54843">
    <property type="entry name" value="Ribosomal protein L22"/>
    <property type="match status" value="1"/>
</dbReference>
<dbReference type="PROSITE" id="PS00464">
    <property type="entry name" value="RIBOSOMAL_L22"/>
    <property type="match status" value="1"/>
</dbReference>
<accession>B8HD01</accession>
<gene>
    <name evidence="1" type="primary">rplV</name>
    <name type="ordered locus">Achl_2682</name>
</gene>
<comment type="function">
    <text evidence="1">This protein binds specifically to 23S rRNA; its binding is stimulated by other ribosomal proteins, e.g. L4, L17, and L20. It is important during the early stages of 50S assembly. It makes multiple contacts with different domains of the 23S rRNA in the assembled 50S subunit and ribosome (By similarity).</text>
</comment>
<comment type="function">
    <text evidence="1">The globular domain of the protein is located near the polypeptide exit tunnel on the outside of the subunit, while an extended beta-hairpin is found that lines the wall of the exit tunnel in the center of the 70S ribosome.</text>
</comment>
<comment type="subunit">
    <text evidence="1">Part of the 50S ribosomal subunit.</text>
</comment>
<comment type="similarity">
    <text evidence="1">Belongs to the universal ribosomal protein uL22 family.</text>
</comment>
<sequence>MEAKAIARHIRVTPMKARRVVNLVRGLQANEALAILKFAPQAASEPVFKVVQSAISNARVLADRDGVAFDEGDLIISEAFVDEGPTMKRFQPRAQGRAFQIKKRTSHITVVVATPEKEEAR</sequence>